<organism>
    <name type="scientific">Mus musculus</name>
    <name type="common">Mouse</name>
    <dbReference type="NCBI Taxonomy" id="10090"/>
    <lineage>
        <taxon>Eukaryota</taxon>
        <taxon>Metazoa</taxon>
        <taxon>Chordata</taxon>
        <taxon>Craniata</taxon>
        <taxon>Vertebrata</taxon>
        <taxon>Euteleostomi</taxon>
        <taxon>Mammalia</taxon>
        <taxon>Eutheria</taxon>
        <taxon>Euarchontoglires</taxon>
        <taxon>Glires</taxon>
        <taxon>Rodentia</taxon>
        <taxon>Myomorpha</taxon>
        <taxon>Muroidea</taxon>
        <taxon>Muridae</taxon>
        <taxon>Murinae</taxon>
        <taxon>Mus</taxon>
        <taxon>Mus</taxon>
    </lineage>
</organism>
<gene>
    <name type="primary">Ap1s2</name>
</gene>
<dbReference type="EMBL" id="AK005223">
    <property type="protein sequence ID" value="BAB23892.1"/>
    <property type="molecule type" value="mRNA"/>
</dbReference>
<dbReference type="EMBL" id="AK045558">
    <property type="protein sequence ID" value="BAC32418.1"/>
    <property type="molecule type" value="mRNA"/>
</dbReference>
<dbReference type="EMBL" id="AK047724">
    <property type="protein sequence ID" value="BAC33140.1"/>
    <property type="molecule type" value="mRNA"/>
</dbReference>
<dbReference type="EMBL" id="BX469932">
    <property type="status" value="NOT_ANNOTATED_CDS"/>
    <property type="molecule type" value="Genomic_DNA"/>
</dbReference>
<dbReference type="CCDS" id="CCDS72465.1"/>
<dbReference type="RefSeq" id="NP_001277307.1">
    <property type="nucleotide sequence ID" value="NM_001290378.1"/>
</dbReference>
<dbReference type="RefSeq" id="NP_001277308.1">
    <property type="nucleotide sequence ID" value="NM_001290379.1"/>
</dbReference>
<dbReference type="RefSeq" id="NP_081163.2">
    <property type="nucleotide sequence ID" value="NM_026887.3"/>
</dbReference>
<dbReference type="RefSeq" id="XP_011246071.1">
    <property type="nucleotide sequence ID" value="XM_011247769.4"/>
</dbReference>
<dbReference type="SMR" id="Q9DB50"/>
<dbReference type="BioGRID" id="223765">
    <property type="interactions" value="6"/>
</dbReference>
<dbReference type="ComplexPortal" id="CPX-5142">
    <property type="entry name" value="Ubiquitous AP-1 Adaptor complex, sigma1b variant"/>
</dbReference>
<dbReference type="FunCoup" id="Q9DB50">
    <property type="interactions" value="2190"/>
</dbReference>
<dbReference type="IntAct" id="Q9DB50">
    <property type="interactions" value="2"/>
</dbReference>
<dbReference type="STRING" id="10090.ENSMUSP00000107913"/>
<dbReference type="iPTMnet" id="Q9DB50"/>
<dbReference type="PhosphoSitePlus" id="Q9DB50"/>
<dbReference type="PaxDb" id="10090-ENSMUSP00000107913"/>
<dbReference type="ProteomicsDB" id="281782"/>
<dbReference type="Pumba" id="Q9DB50"/>
<dbReference type="Antibodypedia" id="23979">
    <property type="antibodies" value="69 antibodies from 22 providers"/>
</dbReference>
<dbReference type="DNASU" id="108012"/>
<dbReference type="Ensembl" id="ENSMUST00000069041.15">
    <property type="protein sequence ID" value="ENSMUSP00000066185.9"/>
    <property type="gene ID" value="ENSMUSG00000031367.16"/>
</dbReference>
<dbReference type="GeneID" id="108012"/>
<dbReference type="KEGG" id="mmu:108012"/>
<dbReference type="UCSC" id="uc009uuy.2">
    <property type="organism name" value="mouse"/>
</dbReference>
<dbReference type="AGR" id="MGI:1889383"/>
<dbReference type="CTD" id="8905"/>
<dbReference type="MGI" id="MGI:1889383">
    <property type="gene designation" value="Ap1s2"/>
</dbReference>
<dbReference type="VEuPathDB" id="HostDB:ENSMUSG00000031367"/>
<dbReference type="eggNOG" id="KOG0934">
    <property type="taxonomic scope" value="Eukaryota"/>
</dbReference>
<dbReference type="GeneTree" id="ENSGT00970000193372"/>
<dbReference type="InParanoid" id="Q9DB50"/>
<dbReference type="OMA" id="KAYHILD"/>
<dbReference type="OrthoDB" id="371463at2759"/>
<dbReference type="PhylomeDB" id="Q9DB50"/>
<dbReference type="Reactome" id="R-MMU-2132295">
    <property type="pathway name" value="MHC class II antigen presentation"/>
</dbReference>
<dbReference type="Reactome" id="R-MMU-432720">
    <property type="pathway name" value="Lysosome Vesicle Biogenesis"/>
</dbReference>
<dbReference type="Reactome" id="R-MMU-432722">
    <property type="pathway name" value="Golgi Associated Vesicle Biogenesis"/>
</dbReference>
<dbReference type="BioGRID-ORCS" id="108012">
    <property type="hits" value="1 hit in 78 CRISPR screens"/>
</dbReference>
<dbReference type="ChiTaRS" id="Ap1s2">
    <property type="organism name" value="mouse"/>
</dbReference>
<dbReference type="PRO" id="PR:Q9DB50"/>
<dbReference type="Proteomes" id="UP000000589">
    <property type="component" value="Chromosome X"/>
</dbReference>
<dbReference type="RNAct" id="Q9DB50">
    <property type="molecule type" value="protein"/>
</dbReference>
<dbReference type="Bgee" id="ENSMUSG00000031367">
    <property type="expression patterns" value="Expressed in substantia nigra and 238 other cell types or tissues"/>
</dbReference>
<dbReference type="ExpressionAtlas" id="Q9DB50">
    <property type="expression patterns" value="baseline and differential"/>
</dbReference>
<dbReference type="GO" id="GO:0030121">
    <property type="term" value="C:AP-1 adaptor complex"/>
    <property type="evidence" value="ECO:0000303"/>
    <property type="project" value="ComplexPortal"/>
</dbReference>
<dbReference type="GO" id="GO:0005905">
    <property type="term" value="C:clathrin-coated pit"/>
    <property type="evidence" value="ECO:0007669"/>
    <property type="project" value="UniProtKB-SubCell"/>
</dbReference>
<dbReference type="GO" id="GO:0005769">
    <property type="term" value="C:early endosome"/>
    <property type="evidence" value="ECO:0000303"/>
    <property type="project" value="ComplexPortal"/>
</dbReference>
<dbReference type="GO" id="GO:0005765">
    <property type="term" value="C:lysosomal membrane"/>
    <property type="evidence" value="ECO:0000303"/>
    <property type="project" value="ComplexPortal"/>
</dbReference>
<dbReference type="GO" id="GO:0098793">
    <property type="term" value="C:presynapse"/>
    <property type="evidence" value="ECO:0007669"/>
    <property type="project" value="GOC"/>
</dbReference>
<dbReference type="GO" id="GO:0032588">
    <property type="term" value="C:trans-Golgi network membrane"/>
    <property type="evidence" value="ECO:0000303"/>
    <property type="project" value="ComplexPortal"/>
</dbReference>
<dbReference type="GO" id="GO:0035615">
    <property type="term" value="F:clathrin adaptor activity"/>
    <property type="evidence" value="ECO:0007669"/>
    <property type="project" value="InterPro"/>
</dbReference>
<dbReference type="GO" id="GO:0060612">
    <property type="term" value="P:adipose tissue development"/>
    <property type="evidence" value="ECO:0000315"/>
    <property type="project" value="MGI"/>
</dbReference>
<dbReference type="GO" id="GO:0051649">
    <property type="term" value="P:establishment of localization in cell"/>
    <property type="evidence" value="ECO:0000315"/>
    <property type="project" value="MGI"/>
</dbReference>
<dbReference type="GO" id="GO:0045444">
    <property type="term" value="P:fat cell differentiation"/>
    <property type="evidence" value="ECO:0000315"/>
    <property type="project" value="MGI"/>
</dbReference>
<dbReference type="GO" id="GO:0006886">
    <property type="term" value="P:intracellular protein transport"/>
    <property type="evidence" value="ECO:0007669"/>
    <property type="project" value="InterPro"/>
</dbReference>
<dbReference type="GO" id="GO:1903232">
    <property type="term" value="P:melanosome assembly"/>
    <property type="evidence" value="ECO:0000303"/>
    <property type="project" value="ComplexPortal"/>
</dbReference>
<dbReference type="GO" id="GO:0050885">
    <property type="term" value="P:neuromuscular process controlling balance"/>
    <property type="evidence" value="ECO:0000315"/>
    <property type="project" value="MGI"/>
</dbReference>
<dbReference type="GO" id="GO:0060155">
    <property type="term" value="P:platelet dense granule organization"/>
    <property type="evidence" value="ECO:0000303"/>
    <property type="project" value="ComplexPortal"/>
</dbReference>
<dbReference type="GO" id="GO:0016182">
    <property type="term" value="P:synaptic vesicle budding from endosome"/>
    <property type="evidence" value="ECO:0000314"/>
    <property type="project" value="SynGO"/>
</dbReference>
<dbReference type="GO" id="GO:0036465">
    <property type="term" value="P:synaptic vesicle recycling"/>
    <property type="evidence" value="ECO:0000315"/>
    <property type="project" value="MGI"/>
</dbReference>
<dbReference type="GO" id="GO:0016192">
    <property type="term" value="P:vesicle-mediated transport"/>
    <property type="evidence" value="ECO:0000315"/>
    <property type="project" value="MGI"/>
</dbReference>
<dbReference type="GO" id="GO:0008542">
    <property type="term" value="P:visual learning"/>
    <property type="evidence" value="ECO:0000315"/>
    <property type="project" value="MGI"/>
</dbReference>
<dbReference type="CDD" id="cd14831">
    <property type="entry name" value="AP1_sigma"/>
    <property type="match status" value="1"/>
</dbReference>
<dbReference type="FunFam" id="3.30.450.60:FF:000009">
    <property type="entry name" value="AP complex subunit sigma"/>
    <property type="match status" value="1"/>
</dbReference>
<dbReference type="Gene3D" id="3.30.450.60">
    <property type="match status" value="1"/>
</dbReference>
<dbReference type="InterPro" id="IPR044733">
    <property type="entry name" value="AP1_sigma"/>
</dbReference>
<dbReference type="InterPro" id="IPR016635">
    <property type="entry name" value="AP_complex_ssu"/>
</dbReference>
<dbReference type="InterPro" id="IPR022775">
    <property type="entry name" value="AP_mu_sigma_su"/>
</dbReference>
<dbReference type="InterPro" id="IPR000804">
    <property type="entry name" value="Clathrin_sm-chain_CS"/>
</dbReference>
<dbReference type="InterPro" id="IPR011012">
    <property type="entry name" value="Longin-like_dom_sf"/>
</dbReference>
<dbReference type="PANTHER" id="PTHR11753">
    <property type="entry name" value="ADAPTOR COMPLEXES SMALL SUBUNIT FAMILY"/>
    <property type="match status" value="1"/>
</dbReference>
<dbReference type="Pfam" id="PF01217">
    <property type="entry name" value="Clat_adaptor_s"/>
    <property type="match status" value="1"/>
</dbReference>
<dbReference type="PIRSF" id="PIRSF015588">
    <property type="entry name" value="AP_complex_sigma"/>
    <property type="match status" value="1"/>
</dbReference>
<dbReference type="SUPFAM" id="SSF64356">
    <property type="entry name" value="SNARE-like"/>
    <property type="match status" value="1"/>
</dbReference>
<dbReference type="PROSITE" id="PS00989">
    <property type="entry name" value="CLAT_ADAPTOR_S"/>
    <property type="match status" value="1"/>
</dbReference>
<comment type="function">
    <text evidence="1">Subunit of clathrin-associated adaptor protein complex 1 that plays a role in protein sorting in the late-Golgi/trans-Golgi network (TGN) and/or endosomes. The AP complexes mediate both the recruitment of clathrin to membranes and the recognition of sorting signals within the cytosolic tails of transmembrane cargo molecules (By similarity).</text>
</comment>
<comment type="subunit">
    <text evidence="1">Adaptor protein complex 1 (AP-1) is a heterotetramer composed of two large adaptins (gamma-type subunit AP1G1 and beta-type subunit AP1B1), a medium adaptin (mu-type subunit AP1M1 or AP1M2) and a small adaptin (sigma-type subunit AP1S1 or AP1S2 or AP1S3). Binds to MUC1 (By similarity).</text>
</comment>
<comment type="subcellular location">
    <subcellularLocation>
        <location>Golgi apparatus</location>
    </subcellularLocation>
    <subcellularLocation>
        <location evidence="1">Cytoplasmic vesicle membrane</location>
        <topology evidence="1">Peripheral membrane protein</topology>
        <orientation evidence="1">Cytoplasmic side</orientation>
    </subcellularLocation>
    <subcellularLocation>
        <location evidence="1">Membrane</location>
        <location evidence="1">Clathrin-coated pit</location>
    </subcellularLocation>
    <text evidence="1">Component of the coat surrounding the cytoplasmic face of coated vesicles located at the Golgi complex.</text>
</comment>
<comment type="tissue specificity">
    <text>Widely expressed.</text>
</comment>
<comment type="similarity">
    <text evidence="2">Belongs to the adaptor complexes small subunit family.</text>
</comment>
<protein>
    <recommendedName>
        <fullName>AP-1 complex subunit sigma-2</fullName>
    </recommendedName>
    <alternativeName>
        <fullName>Adaptor protein complex AP-1 subunit sigma-1B</fullName>
    </alternativeName>
    <alternativeName>
        <fullName>Adaptor-related protein complex 1 subunit sigma-1B</fullName>
    </alternativeName>
    <alternativeName>
        <fullName>Clathrin assembly protein complex 1 sigma-1B small chain</fullName>
    </alternativeName>
    <alternativeName>
        <fullName>Golgi adaptor HA1/AP1 adaptin sigma-1B subunit</fullName>
    </alternativeName>
    <alternativeName>
        <fullName>Sigma 1B subunit of AP-1 clathrin</fullName>
    </alternativeName>
    <alternativeName>
        <fullName>Sigma-adaptin 1B</fullName>
    </alternativeName>
    <alternativeName>
        <fullName>Sigma1B-adaptin</fullName>
    </alternativeName>
</protein>
<proteinExistence type="evidence at protein level"/>
<accession>Q9DB50</accession>
<accession>B1B0F4</accession>
<accession>Q543R7</accession>
<reference key="1">
    <citation type="journal article" date="2005" name="Science">
        <title>The transcriptional landscape of the mammalian genome.</title>
        <authorList>
            <person name="Carninci P."/>
            <person name="Kasukawa T."/>
            <person name="Katayama S."/>
            <person name="Gough J."/>
            <person name="Frith M.C."/>
            <person name="Maeda N."/>
            <person name="Oyama R."/>
            <person name="Ravasi T."/>
            <person name="Lenhard B."/>
            <person name="Wells C."/>
            <person name="Kodzius R."/>
            <person name="Shimokawa K."/>
            <person name="Bajic V.B."/>
            <person name="Brenner S.E."/>
            <person name="Batalov S."/>
            <person name="Forrest A.R."/>
            <person name="Zavolan M."/>
            <person name="Davis M.J."/>
            <person name="Wilming L.G."/>
            <person name="Aidinis V."/>
            <person name="Allen J.E."/>
            <person name="Ambesi-Impiombato A."/>
            <person name="Apweiler R."/>
            <person name="Aturaliya R.N."/>
            <person name="Bailey T.L."/>
            <person name="Bansal M."/>
            <person name="Baxter L."/>
            <person name="Beisel K.W."/>
            <person name="Bersano T."/>
            <person name="Bono H."/>
            <person name="Chalk A.M."/>
            <person name="Chiu K.P."/>
            <person name="Choudhary V."/>
            <person name="Christoffels A."/>
            <person name="Clutterbuck D.R."/>
            <person name="Crowe M.L."/>
            <person name="Dalla E."/>
            <person name="Dalrymple B.P."/>
            <person name="de Bono B."/>
            <person name="Della Gatta G."/>
            <person name="di Bernardo D."/>
            <person name="Down T."/>
            <person name="Engstrom P."/>
            <person name="Fagiolini M."/>
            <person name="Faulkner G."/>
            <person name="Fletcher C.F."/>
            <person name="Fukushima T."/>
            <person name="Furuno M."/>
            <person name="Futaki S."/>
            <person name="Gariboldi M."/>
            <person name="Georgii-Hemming P."/>
            <person name="Gingeras T.R."/>
            <person name="Gojobori T."/>
            <person name="Green R.E."/>
            <person name="Gustincich S."/>
            <person name="Harbers M."/>
            <person name="Hayashi Y."/>
            <person name="Hensch T.K."/>
            <person name="Hirokawa N."/>
            <person name="Hill D."/>
            <person name="Huminiecki L."/>
            <person name="Iacono M."/>
            <person name="Ikeo K."/>
            <person name="Iwama A."/>
            <person name="Ishikawa T."/>
            <person name="Jakt M."/>
            <person name="Kanapin A."/>
            <person name="Katoh M."/>
            <person name="Kawasawa Y."/>
            <person name="Kelso J."/>
            <person name="Kitamura H."/>
            <person name="Kitano H."/>
            <person name="Kollias G."/>
            <person name="Krishnan S.P."/>
            <person name="Kruger A."/>
            <person name="Kummerfeld S.K."/>
            <person name="Kurochkin I.V."/>
            <person name="Lareau L.F."/>
            <person name="Lazarevic D."/>
            <person name="Lipovich L."/>
            <person name="Liu J."/>
            <person name="Liuni S."/>
            <person name="McWilliam S."/>
            <person name="Madan Babu M."/>
            <person name="Madera M."/>
            <person name="Marchionni L."/>
            <person name="Matsuda H."/>
            <person name="Matsuzawa S."/>
            <person name="Miki H."/>
            <person name="Mignone F."/>
            <person name="Miyake S."/>
            <person name="Morris K."/>
            <person name="Mottagui-Tabar S."/>
            <person name="Mulder N."/>
            <person name="Nakano N."/>
            <person name="Nakauchi H."/>
            <person name="Ng P."/>
            <person name="Nilsson R."/>
            <person name="Nishiguchi S."/>
            <person name="Nishikawa S."/>
            <person name="Nori F."/>
            <person name="Ohara O."/>
            <person name="Okazaki Y."/>
            <person name="Orlando V."/>
            <person name="Pang K.C."/>
            <person name="Pavan W.J."/>
            <person name="Pavesi G."/>
            <person name="Pesole G."/>
            <person name="Petrovsky N."/>
            <person name="Piazza S."/>
            <person name="Reed J."/>
            <person name="Reid J.F."/>
            <person name="Ring B.Z."/>
            <person name="Ringwald M."/>
            <person name="Rost B."/>
            <person name="Ruan Y."/>
            <person name="Salzberg S.L."/>
            <person name="Sandelin A."/>
            <person name="Schneider C."/>
            <person name="Schoenbach C."/>
            <person name="Sekiguchi K."/>
            <person name="Semple C.A."/>
            <person name="Seno S."/>
            <person name="Sessa L."/>
            <person name="Sheng Y."/>
            <person name="Shibata Y."/>
            <person name="Shimada H."/>
            <person name="Shimada K."/>
            <person name="Silva D."/>
            <person name="Sinclair B."/>
            <person name="Sperling S."/>
            <person name="Stupka E."/>
            <person name="Sugiura K."/>
            <person name="Sultana R."/>
            <person name="Takenaka Y."/>
            <person name="Taki K."/>
            <person name="Tammoja K."/>
            <person name="Tan S.L."/>
            <person name="Tang S."/>
            <person name="Taylor M.S."/>
            <person name="Tegner J."/>
            <person name="Teichmann S.A."/>
            <person name="Ueda H.R."/>
            <person name="van Nimwegen E."/>
            <person name="Verardo R."/>
            <person name="Wei C.L."/>
            <person name="Yagi K."/>
            <person name="Yamanishi H."/>
            <person name="Zabarovsky E."/>
            <person name="Zhu S."/>
            <person name="Zimmer A."/>
            <person name="Hide W."/>
            <person name="Bult C."/>
            <person name="Grimmond S.M."/>
            <person name="Teasdale R.D."/>
            <person name="Liu E.T."/>
            <person name="Brusic V."/>
            <person name="Quackenbush J."/>
            <person name="Wahlestedt C."/>
            <person name="Mattick J.S."/>
            <person name="Hume D.A."/>
            <person name="Kai C."/>
            <person name="Sasaki D."/>
            <person name="Tomaru Y."/>
            <person name="Fukuda S."/>
            <person name="Kanamori-Katayama M."/>
            <person name="Suzuki M."/>
            <person name="Aoki J."/>
            <person name="Arakawa T."/>
            <person name="Iida J."/>
            <person name="Imamura K."/>
            <person name="Itoh M."/>
            <person name="Kato T."/>
            <person name="Kawaji H."/>
            <person name="Kawagashira N."/>
            <person name="Kawashima T."/>
            <person name="Kojima M."/>
            <person name="Kondo S."/>
            <person name="Konno H."/>
            <person name="Nakano K."/>
            <person name="Ninomiya N."/>
            <person name="Nishio T."/>
            <person name="Okada M."/>
            <person name="Plessy C."/>
            <person name="Shibata K."/>
            <person name="Shiraki T."/>
            <person name="Suzuki S."/>
            <person name="Tagami M."/>
            <person name="Waki K."/>
            <person name="Watahiki A."/>
            <person name="Okamura-Oho Y."/>
            <person name="Suzuki H."/>
            <person name="Kawai J."/>
            <person name="Hayashizaki Y."/>
        </authorList>
    </citation>
    <scope>NUCLEOTIDE SEQUENCE [LARGE SCALE MRNA]</scope>
    <source>
        <strain>C57BL/6J</strain>
        <tissue>Cerebellum</tissue>
        <tissue>Corpora quadrigemina</tissue>
        <tissue>Corpus striatum</tissue>
    </source>
</reference>
<reference key="2">
    <citation type="journal article" date="2009" name="PLoS Biol.">
        <title>Lineage-specific biology revealed by a finished genome assembly of the mouse.</title>
        <authorList>
            <person name="Church D.M."/>
            <person name="Goodstadt L."/>
            <person name="Hillier L.W."/>
            <person name="Zody M.C."/>
            <person name="Goldstein S."/>
            <person name="She X."/>
            <person name="Bult C.J."/>
            <person name="Agarwala R."/>
            <person name="Cherry J.L."/>
            <person name="DiCuccio M."/>
            <person name="Hlavina W."/>
            <person name="Kapustin Y."/>
            <person name="Meric P."/>
            <person name="Maglott D."/>
            <person name="Birtle Z."/>
            <person name="Marques A.C."/>
            <person name="Graves T."/>
            <person name="Zhou S."/>
            <person name="Teague B."/>
            <person name="Potamousis K."/>
            <person name="Churas C."/>
            <person name="Place M."/>
            <person name="Herschleb J."/>
            <person name="Runnheim R."/>
            <person name="Forrest D."/>
            <person name="Amos-Landgraf J."/>
            <person name="Schwartz D.C."/>
            <person name="Cheng Z."/>
            <person name="Lindblad-Toh K."/>
            <person name="Eichler E.E."/>
            <person name="Ponting C.P."/>
        </authorList>
    </citation>
    <scope>NUCLEOTIDE SEQUENCE [LARGE SCALE GENOMIC DNA]</scope>
    <source>
        <strain>C57BL/6J</strain>
    </source>
</reference>
<reference key="3">
    <citation type="journal article" date="2010" name="Cell">
        <title>A tissue-specific atlas of mouse protein phosphorylation and expression.</title>
        <authorList>
            <person name="Huttlin E.L."/>
            <person name="Jedrychowski M.P."/>
            <person name="Elias J.E."/>
            <person name="Goswami T."/>
            <person name="Rad R."/>
            <person name="Beausoleil S.A."/>
            <person name="Villen J."/>
            <person name="Haas W."/>
            <person name="Sowa M.E."/>
            <person name="Gygi S.P."/>
        </authorList>
    </citation>
    <scope>IDENTIFICATION BY MASS SPECTROMETRY [LARGE SCALE ANALYSIS]</scope>
    <source>
        <tissue>Brain</tissue>
        <tissue>Spleen</tissue>
    </source>
</reference>
<feature type="chain" id="PRO_0000193800" description="AP-1 complex subunit sigma-2">
    <location>
        <begin position="1"/>
        <end position="160"/>
    </location>
</feature>
<keyword id="KW-0168">Coated pit</keyword>
<keyword id="KW-0968">Cytoplasmic vesicle</keyword>
<keyword id="KW-0333">Golgi apparatus</keyword>
<keyword id="KW-0472">Membrane</keyword>
<keyword id="KW-0653">Protein transport</keyword>
<keyword id="KW-1185">Reference proteome</keyword>
<keyword id="KW-0813">Transport</keyword>
<name>AP1S2_MOUSE</name>
<evidence type="ECO:0000250" key="1"/>
<evidence type="ECO:0000305" key="2"/>
<sequence length="160" mass="18929">MQFMLLFSRQGKLRLQKWYVPLSDKEKKKITRELVQTVLARKPKMCSFLEWRDLKIVYKRYASLYFCCAIEDQDNELITLEIIHRYVELLDKYFGSVCELDIIFNFEKAYFILDEFLLGGEVQETSKKNVLKAIEQADLLQEDAKEAETPRSVLEEIGLT</sequence>